<organism>
    <name type="scientific">Pectobacterium atrosepticum (strain SCRI 1043 / ATCC BAA-672)</name>
    <name type="common">Erwinia carotovora subsp. atroseptica</name>
    <dbReference type="NCBI Taxonomy" id="218491"/>
    <lineage>
        <taxon>Bacteria</taxon>
        <taxon>Pseudomonadati</taxon>
        <taxon>Pseudomonadota</taxon>
        <taxon>Gammaproteobacteria</taxon>
        <taxon>Enterobacterales</taxon>
        <taxon>Pectobacteriaceae</taxon>
        <taxon>Pectobacterium</taxon>
    </lineage>
</organism>
<feature type="chain" id="PRO_0000241344" description="Large ribosomal subunit protein uL3">
    <location>
        <begin position="1"/>
        <end position="209"/>
    </location>
</feature>
<feature type="region of interest" description="Disordered" evidence="2">
    <location>
        <begin position="133"/>
        <end position="153"/>
    </location>
</feature>
<feature type="modified residue" description="N5-methylglutamine" evidence="1">
    <location>
        <position position="150"/>
    </location>
</feature>
<protein>
    <recommendedName>
        <fullName evidence="1">Large ribosomal subunit protein uL3</fullName>
    </recommendedName>
    <alternativeName>
        <fullName evidence="3">50S ribosomal protein L3</fullName>
    </alternativeName>
</protein>
<gene>
    <name evidence="1" type="primary">rplC</name>
    <name type="ordered locus">ECA4031</name>
</gene>
<reference key="1">
    <citation type="journal article" date="2004" name="Proc. Natl. Acad. Sci. U.S.A.">
        <title>Genome sequence of the enterobacterial phytopathogen Erwinia carotovora subsp. atroseptica and characterization of virulence factors.</title>
        <authorList>
            <person name="Bell K.S."/>
            <person name="Sebaihia M."/>
            <person name="Pritchard L."/>
            <person name="Holden M.T.G."/>
            <person name="Hyman L.J."/>
            <person name="Holeva M.C."/>
            <person name="Thomson N.R."/>
            <person name="Bentley S.D."/>
            <person name="Churcher L.J.C."/>
            <person name="Mungall K."/>
            <person name="Atkin R."/>
            <person name="Bason N."/>
            <person name="Brooks K."/>
            <person name="Chillingworth T."/>
            <person name="Clark K."/>
            <person name="Doggett J."/>
            <person name="Fraser A."/>
            <person name="Hance Z."/>
            <person name="Hauser H."/>
            <person name="Jagels K."/>
            <person name="Moule S."/>
            <person name="Norbertczak H."/>
            <person name="Ormond D."/>
            <person name="Price C."/>
            <person name="Quail M.A."/>
            <person name="Sanders M."/>
            <person name="Walker D."/>
            <person name="Whitehead S."/>
            <person name="Salmond G.P.C."/>
            <person name="Birch P.R.J."/>
            <person name="Parkhill J."/>
            <person name="Toth I.K."/>
        </authorList>
    </citation>
    <scope>NUCLEOTIDE SEQUENCE [LARGE SCALE GENOMIC DNA]</scope>
    <source>
        <strain>SCRI 1043 / ATCC BAA-672</strain>
    </source>
</reference>
<proteinExistence type="inferred from homology"/>
<dbReference type="EMBL" id="BX950851">
    <property type="protein sequence ID" value="CAG76928.1"/>
    <property type="molecule type" value="Genomic_DNA"/>
</dbReference>
<dbReference type="RefSeq" id="WP_011095511.1">
    <property type="nucleotide sequence ID" value="NC_004547.2"/>
</dbReference>
<dbReference type="SMR" id="Q6CZX0"/>
<dbReference type="STRING" id="218491.ECA4031"/>
<dbReference type="GeneID" id="57210695"/>
<dbReference type="KEGG" id="eca:ECA4031"/>
<dbReference type="PATRIC" id="fig|218491.5.peg.4097"/>
<dbReference type="eggNOG" id="COG0087">
    <property type="taxonomic scope" value="Bacteria"/>
</dbReference>
<dbReference type="HOGENOM" id="CLU_044142_4_1_6"/>
<dbReference type="OrthoDB" id="9806135at2"/>
<dbReference type="Proteomes" id="UP000007966">
    <property type="component" value="Chromosome"/>
</dbReference>
<dbReference type="GO" id="GO:0022625">
    <property type="term" value="C:cytosolic large ribosomal subunit"/>
    <property type="evidence" value="ECO:0007669"/>
    <property type="project" value="TreeGrafter"/>
</dbReference>
<dbReference type="GO" id="GO:0019843">
    <property type="term" value="F:rRNA binding"/>
    <property type="evidence" value="ECO:0007669"/>
    <property type="project" value="UniProtKB-UniRule"/>
</dbReference>
<dbReference type="GO" id="GO:0003735">
    <property type="term" value="F:structural constituent of ribosome"/>
    <property type="evidence" value="ECO:0007669"/>
    <property type="project" value="InterPro"/>
</dbReference>
<dbReference type="GO" id="GO:0006412">
    <property type="term" value="P:translation"/>
    <property type="evidence" value="ECO:0007669"/>
    <property type="project" value="UniProtKB-UniRule"/>
</dbReference>
<dbReference type="FunFam" id="2.40.30.10:FF:000004">
    <property type="entry name" value="50S ribosomal protein L3"/>
    <property type="match status" value="1"/>
</dbReference>
<dbReference type="FunFam" id="3.30.160.810:FF:000001">
    <property type="entry name" value="50S ribosomal protein L3"/>
    <property type="match status" value="1"/>
</dbReference>
<dbReference type="Gene3D" id="3.30.160.810">
    <property type="match status" value="1"/>
</dbReference>
<dbReference type="Gene3D" id="2.40.30.10">
    <property type="entry name" value="Translation factors"/>
    <property type="match status" value="1"/>
</dbReference>
<dbReference type="HAMAP" id="MF_01325_B">
    <property type="entry name" value="Ribosomal_uL3_B"/>
    <property type="match status" value="1"/>
</dbReference>
<dbReference type="InterPro" id="IPR000597">
    <property type="entry name" value="Ribosomal_uL3"/>
</dbReference>
<dbReference type="InterPro" id="IPR019927">
    <property type="entry name" value="Ribosomal_uL3_bac/org-type"/>
</dbReference>
<dbReference type="InterPro" id="IPR019926">
    <property type="entry name" value="Ribosomal_uL3_CS"/>
</dbReference>
<dbReference type="InterPro" id="IPR009000">
    <property type="entry name" value="Transl_B-barrel_sf"/>
</dbReference>
<dbReference type="NCBIfam" id="TIGR03625">
    <property type="entry name" value="L3_bact"/>
    <property type="match status" value="1"/>
</dbReference>
<dbReference type="PANTHER" id="PTHR11229">
    <property type="entry name" value="50S RIBOSOMAL PROTEIN L3"/>
    <property type="match status" value="1"/>
</dbReference>
<dbReference type="PANTHER" id="PTHR11229:SF16">
    <property type="entry name" value="LARGE RIBOSOMAL SUBUNIT PROTEIN UL3C"/>
    <property type="match status" value="1"/>
</dbReference>
<dbReference type="Pfam" id="PF00297">
    <property type="entry name" value="Ribosomal_L3"/>
    <property type="match status" value="1"/>
</dbReference>
<dbReference type="SUPFAM" id="SSF50447">
    <property type="entry name" value="Translation proteins"/>
    <property type="match status" value="1"/>
</dbReference>
<dbReference type="PROSITE" id="PS00474">
    <property type="entry name" value="RIBOSOMAL_L3"/>
    <property type="match status" value="1"/>
</dbReference>
<sequence length="209" mass="22211">MIGLVGKKVGMTRIFTEDGVSIPVTVIEIEANRVTQVKDLANDGYRAVQVTAGAKKANRVTKPEAGHFAKAGVEAGRTLREFRLSEGEEFTVGQSISVEIFADIKKVDVTGTSKGKGFAGTVKRWNFRTQDATHGNSLSHRAPGSIGQNQTPGKVFKGKKMAGQLGNERVTVQSLDVVRVDAERNLLLVKGAVPGATGSDLIVKPAVKA</sequence>
<accession>Q6CZX0</accession>
<keyword id="KW-0488">Methylation</keyword>
<keyword id="KW-1185">Reference proteome</keyword>
<keyword id="KW-0687">Ribonucleoprotein</keyword>
<keyword id="KW-0689">Ribosomal protein</keyword>
<keyword id="KW-0694">RNA-binding</keyword>
<keyword id="KW-0699">rRNA-binding</keyword>
<comment type="function">
    <text evidence="1">One of the primary rRNA binding proteins, it binds directly near the 3'-end of the 23S rRNA, where it nucleates assembly of the 50S subunit.</text>
</comment>
<comment type="subunit">
    <text evidence="1">Part of the 50S ribosomal subunit. Forms a cluster with proteins L14 and L19.</text>
</comment>
<comment type="PTM">
    <text evidence="1">Methylated by PrmB.</text>
</comment>
<comment type="similarity">
    <text evidence="1">Belongs to the universal ribosomal protein uL3 family.</text>
</comment>
<evidence type="ECO:0000255" key="1">
    <source>
        <dbReference type="HAMAP-Rule" id="MF_01325"/>
    </source>
</evidence>
<evidence type="ECO:0000256" key="2">
    <source>
        <dbReference type="SAM" id="MobiDB-lite"/>
    </source>
</evidence>
<evidence type="ECO:0000305" key="3"/>
<name>RL3_PECAS</name>